<evidence type="ECO:0000250" key="1">
    <source>
        <dbReference type="UniProtKB" id="P0DQR9"/>
    </source>
</evidence>
<evidence type="ECO:0000255" key="2"/>
<evidence type="ECO:0000256" key="3">
    <source>
        <dbReference type="SAM" id="MobiDB-lite"/>
    </source>
</evidence>
<evidence type="ECO:0000269" key="4">
    <source>
    </source>
</evidence>
<evidence type="ECO:0000303" key="5">
    <source>
    </source>
</evidence>
<evidence type="ECO:0000305" key="6"/>
<evidence type="ECO:0000305" key="7">
    <source>
    </source>
</evidence>
<protein>
    <recommendedName>
        <fullName evidence="5">Venom redulysin 1</fullName>
        <shortName evidence="5">Red1</shortName>
    </recommendedName>
</protein>
<comment type="function">
    <text evidence="1 7">Highly abundant protein that may be responsible for the observed disruption of sensory neuron membranes, since it is homologous to proteins such as trialysin, which forms pores in lipid bilayers (Probable). Probable insecticidal toxin (By similarity).</text>
</comment>
<comment type="subcellular location">
    <subcellularLocation>
        <location evidence="4">Secreted</location>
    </subcellularLocation>
</comment>
<comment type="tissue specificity">
    <text evidence="4">Expressed by the venom gland (posterior main gland) (at protein level).</text>
</comment>
<comment type="PTM">
    <text evidence="6">Contains 5 disulfide bonds.</text>
</comment>
<comment type="similarity">
    <text evidence="6">Belongs to the redulysin-like family.</text>
</comment>
<accession>A0A6B9KZ90</accession>
<reference key="1">
    <citation type="journal article" date="2019" name="Toxins">
        <title>Missiles of mass disruption: composition and glandular origin of venom used as a projectile defensive weapon by the assassin bug Platymeris rhadamanthus.</title>
        <authorList>
            <person name="Walker A.A."/>
            <person name="Robinson S.D."/>
            <person name="Undheim E.A.B."/>
            <person name="Jin J."/>
            <person name="Han X."/>
            <person name="Fry B.G."/>
            <person name="Vetter I."/>
            <person name="King G.F."/>
        </authorList>
    </citation>
    <scope>NUCLEOTIDE SEQUENCE [MRNA]</scope>
    <scope>POSSIBLE FUNCTION</scope>
    <scope>IDENTIFICATION BY MASS SPECTROMETRY</scope>
    <scope>SUBCELLULAR LOCATION</scope>
    <scope>TISSUE SPECIFICITY</scope>
    <source>
        <tissue>Venom</tissue>
        <tissue>Venom gland</tissue>
    </source>
</reference>
<name>RED1_PLARH</name>
<sequence>MSKLWLLLLLVAAFQAVHSYPAAESDYLEEPETTWDILKETWGKMKDHYLNLGKETLAKLKELKENYKTWGKEKKQQFIATLKDKLCTPQDFEEDIDYAESDEDKDLSFTMKVLLILKETLDKLKAAVGEEKEKLIQEVKGLRAKICDKLSDYEEEEEFELEEDYEEDPETTWGILKEAWGKMKEHYLNLGKATLAKLKELKENYKTWGKEKLQIFVAKLKDKLCTQQDFEEDIDYTESDEEKDPALTAKILLKLKEYLEKLKSAAGKEKEKLIQKIKDLRAKICDKLSDYEEEEEEEEEEEFELEEDYEEDPQQTTWGILKETFGKIKDRWSQLTKIQLQKIIQVLKNRYCADQNDFEDDVAESDEEQGGRQVIQKYLQKLKEFYEKIKAAVGAKKEELKKRLEETRQKFCAKLNAAAEQNDLEEDEDEERGWLGKLGKGLKKVGKKFVKKMSSAMKAGCKKGMKMLKDNAVKVTPLVCEEKTCKTLVTILTYSCGMQYTITRTNKATYLEVAFIVNGEVKAKKNVKLGDVPSCVNLGALLGKICLKGIEGKGKSSSGQANVNFCLAILADKYNVGCKFCASYANKKFKVLPPKMFSGAQDDNGEILQASDNGEDGILLDADEFEID</sequence>
<dbReference type="EMBL" id="MN208352">
    <property type="protein sequence ID" value="QHB21541.1"/>
    <property type="molecule type" value="mRNA"/>
</dbReference>
<dbReference type="SMR" id="A0A6B9KZ90"/>
<dbReference type="GO" id="GO:0005576">
    <property type="term" value="C:extracellular region"/>
    <property type="evidence" value="ECO:0007669"/>
    <property type="project" value="UniProtKB-SubCell"/>
</dbReference>
<dbReference type="GO" id="GO:0090729">
    <property type="term" value="F:toxin activity"/>
    <property type="evidence" value="ECO:0007669"/>
    <property type="project" value="UniProtKB-KW"/>
</dbReference>
<organism>
    <name type="scientific">Platymeris rhadamanthus</name>
    <name type="common">Red spot assassin bug</name>
    <dbReference type="NCBI Taxonomy" id="1134088"/>
    <lineage>
        <taxon>Eukaryota</taxon>
        <taxon>Metazoa</taxon>
        <taxon>Ecdysozoa</taxon>
        <taxon>Arthropoda</taxon>
        <taxon>Hexapoda</taxon>
        <taxon>Insecta</taxon>
        <taxon>Pterygota</taxon>
        <taxon>Neoptera</taxon>
        <taxon>Paraneoptera</taxon>
        <taxon>Hemiptera</taxon>
        <taxon>Heteroptera</taxon>
        <taxon>Panheteroptera</taxon>
        <taxon>Cimicomorpha</taxon>
        <taxon>Reduviidae</taxon>
        <taxon>Platymeris</taxon>
    </lineage>
</organism>
<proteinExistence type="evidence at protein level"/>
<keyword id="KW-1015">Disulfide bond</keyword>
<keyword id="KW-0964">Secreted</keyword>
<keyword id="KW-0732">Signal</keyword>
<keyword id="KW-0800">Toxin</keyword>
<feature type="signal peptide" evidence="2">
    <location>
        <begin position="1"/>
        <end position="19"/>
    </location>
</feature>
<feature type="propeptide" id="PRO_0000454323" evidence="1">
    <location>
        <begin position="20"/>
        <end position="368"/>
    </location>
</feature>
<feature type="chain" id="PRO_5025381628" description="Venom redulysin 1" evidence="1">
    <location>
        <begin position="369"/>
        <end position="628"/>
    </location>
</feature>
<feature type="region of interest" description="Disordered" evidence="3">
    <location>
        <begin position="290"/>
        <end position="313"/>
    </location>
</feature>
<feature type="compositionally biased region" description="Acidic residues" evidence="3">
    <location>
        <begin position="291"/>
        <end position="313"/>
    </location>
</feature>